<dbReference type="EC" id="2.7.4.9"/>
<dbReference type="EMBL" id="AJ248284">
    <property type="protein sequence ID" value="CAB49400.1"/>
    <property type="molecule type" value="Genomic_DNA"/>
</dbReference>
<dbReference type="EMBL" id="HE613800">
    <property type="protein sequence ID" value="CCE69861.1"/>
    <property type="molecule type" value="Genomic_DNA"/>
</dbReference>
<dbReference type="PIR" id="A75165">
    <property type="entry name" value="A75165"/>
</dbReference>
<dbReference type="RefSeq" id="WP_010867602.1">
    <property type="nucleotide sequence ID" value="NC_000868.1"/>
</dbReference>
<dbReference type="SMR" id="Q9V1E9"/>
<dbReference type="STRING" id="272844.PAB0319"/>
<dbReference type="KEGG" id="pab:PAB0319"/>
<dbReference type="PATRIC" id="fig|272844.11.peg.505"/>
<dbReference type="eggNOG" id="arCOG01891">
    <property type="taxonomic scope" value="Archaea"/>
</dbReference>
<dbReference type="HOGENOM" id="CLU_049131_1_3_2"/>
<dbReference type="OrthoDB" id="43083at2157"/>
<dbReference type="PhylomeDB" id="Q9V1E9"/>
<dbReference type="Proteomes" id="UP000000810">
    <property type="component" value="Chromosome"/>
</dbReference>
<dbReference type="Proteomes" id="UP000009139">
    <property type="component" value="Chromosome"/>
</dbReference>
<dbReference type="GO" id="GO:0005737">
    <property type="term" value="C:cytoplasm"/>
    <property type="evidence" value="ECO:0007669"/>
    <property type="project" value="TreeGrafter"/>
</dbReference>
<dbReference type="GO" id="GO:0005524">
    <property type="term" value="F:ATP binding"/>
    <property type="evidence" value="ECO:0007669"/>
    <property type="project" value="UniProtKB-UniRule"/>
</dbReference>
<dbReference type="GO" id="GO:0004798">
    <property type="term" value="F:dTMP kinase activity"/>
    <property type="evidence" value="ECO:0007669"/>
    <property type="project" value="UniProtKB-UniRule"/>
</dbReference>
<dbReference type="GO" id="GO:0006233">
    <property type="term" value="P:dTDP biosynthetic process"/>
    <property type="evidence" value="ECO:0007669"/>
    <property type="project" value="InterPro"/>
</dbReference>
<dbReference type="GO" id="GO:0006235">
    <property type="term" value="P:dTTP biosynthetic process"/>
    <property type="evidence" value="ECO:0007669"/>
    <property type="project" value="UniProtKB-UniRule"/>
</dbReference>
<dbReference type="GO" id="GO:0006227">
    <property type="term" value="P:dUDP biosynthetic process"/>
    <property type="evidence" value="ECO:0007669"/>
    <property type="project" value="TreeGrafter"/>
</dbReference>
<dbReference type="CDD" id="cd01672">
    <property type="entry name" value="TMPK"/>
    <property type="match status" value="1"/>
</dbReference>
<dbReference type="FunFam" id="3.40.50.300:FF:000225">
    <property type="entry name" value="Thymidylate kinase"/>
    <property type="match status" value="1"/>
</dbReference>
<dbReference type="Gene3D" id="3.40.50.300">
    <property type="entry name" value="P-loop containing nucleotide triphosphate hydrolases"/>
    <property type="match status" value="1"/>
</dbReference>
<dbReference type="HAMAP" id="MF_00165">
    <property type="entry name" value="Thymidylate_kinase"/>
    <property type="match status" value="1"/>
</dbReference>
<dbReference type="InterPro" id="IPR027417">
    <property type="entry name" value="P-loop_NTPase"/>
</dbReference>
<dbReference type="InterPro" id="IPR039430">
    <property type="entry name" value="Thymidylate_kin-like_dom"/>
</dbReference>
<dbReference type="InterPro" id="IPR018095">
    <property type="entry name" value="Thymidylate_kin_CS"/>
</dbReference>
<dbReference type="InterPro" id="IPR018094">
    <property type="entry name" value="Thymidylate_kinase"/>
</dbReference>
<dbReference type="NCBIfam" id="TIGR00041">
    <property type="entry name" value="DTMP_kinase"/>
    <property type="match status" value="1"/>
</dbReference>
<dbReference type="PANTHER" id="PTHR10344">
    <property type="entry name" value="THYMIDYLATE KINASE"/>
    <property type="match status" value="1"/>
</dbReference>
<dbReference type="PANTHER" id="PTHR10344:SF4">
    <property type="entry name" value="UMP-CMP KINASE 2, MITOCHONDRIAL"/>
    <property type="match status" value="1"/>
</dbReference>
<dbReference type="Pfam" id="PF02223">
    <property type="entry name" value="Thymidylate_kin"/>
    <property type="match status" value="1"/>
</dbReference>
<dbReference type="SUPFAM" id="SSF52540">
    <property type="entry name" value="P-loop containing nucleoside triphosphate hydrolases"/>
    <property type="match status" value="1"/>
</dbReference>
<dbReference type="PROSITE" id="PS01331">
    <property type="entry name" value="THYMIDYLATE_KINASE"/>
    <property type="match status" value="1"/>
</dbReference>
<reference key="1">
    <citation type="journal article" date="2003" name="Mol. Microbiol.">
        <title>An integrated analysis of the genome of the hyperthermophilic archaeon Pyrococcus abyssi.</title>
        <authorList>
            <person name="Cohen G.N."/>
            <person name="Barbe V."/>
            <person name="Flament D."/>
            <person name="Galperin M."/>
            <person name="Heilig R."/>
            <person name="Lecompte O."/>
            <person name="Poch O."/>
            <person name="Prieur D."/>
            <person name="Querellou J."/>
            <person name="Ripp R."/>
            <person name="Thierry J.-C."/>
            <person name="Van der Oost J."/>
            <person name="Weissenbach J."/>
            <person name="Zivanovic Y."/>
            <person name="Forterre P."/>
        </authorList>
    </citation>
    <scope>NUCLEOTIDE SEQUENCE [LARGE SCALE GENOMIC DNA]</scope>
    <source>
        <strain>GE5 / Orsay</strain>
    </source>
</reference>
<reference key="2">
    <citation type="journal article" date="2012" name="Curr. Microbiol.">
        <title>Re-annotation of two hyperthermophilic archaea Pyrococcus abyssi GE5 and Pyrococcus furiosus DSM 3638.</title>
        <authorList>
            <person name="Gao J."/>
            <person name="Wang J."/>
        </authorList>
    </citation>
    <scope>GENOME REANNOTATION</scope>
    <source>
        <strain>GE5 / Orsay</strain>
    </source>
</reference>
<accession>Q9V1E9</accession>
<accession>G8ZGI2</accession>
<evidence type="ECO:0000255" key="1"/>
<evidence type="ECO:0000305" key="2"/>
<protein>
    <recommendedName>
        <fullName>Probable thymidylate kinase</fullName>
        <ecNumber>2.7.4.9</ecNumber>
    </recommendedName>
    <alternativeName>
        <fullName>dTMP kinase</fullName>
    </alternativeName>
</protein>
<keyword id="KW-0067">ATP-binding</keyword>
<keyword id="KW-0418">Kinase</keyword>
<keyword id="KW-0545">Nucleotide biosynthesis</keyword>
<keyword id="KW-0547">Nucleotide-binding</keyword>
<keyword id="KW-0808">Transferase</keyword>
<comment type="catalytic activity">
    <reaction>
        <text>dTMP + ATP = dTDP + ADP</text>
        <dbReference type="Rhea" id="RHEA:13517"/>
        <dbReference type="ChEBI" id="CHEBI:30616"/>
        <dbReference type="ChEBI" id="CHEBI:58369"/>
        <dbReference type="ChEBI" id="CHEBI:63528"/>
        <dbReference type="ChEBI" id="CHEBI:456216"/>
        <dbReference type="EC" id="2.7.4.9"/>
    </reaction>
</comment>
<comment type="similarity">
    <text evidence="2">Belongs to the thymidylate kinase family.</text>
</comment>
<name>KTHY_PYRAB</name>
<sequence length="205" mass="23513">MRGYFVVLEGIDGSGKTTQAKLLAEWFEEQGWDVLLTKEPTDTEFGRLIRELVLKNSIIDGSRISYEAEALLFAADRAEHVKKVILPALEKGKVVICDRYLYSSLAYQWARGLSLEWLMQINSFAPRPDLAILLDLPVKESIRRTKARGNMSEFDKLLELQRKVRMNYLKLAEMFKEMRIVNAMASVEEVHEDIVALVKHELLGL</sequence>
<organism>
    <name type="scientific">Pyrococcus abyssi (strain GE5 / Orsay)</name>
    <dbReference type="NCBI Taxonomy" id="272844"/>
    <lineage>
        <taxon>Archaea</taxon>
        <taxon>Methanobacteriati</taxon>
        <taxon>Methanobacteriota</taxon>
        <taxon>Thermococci</taxon>
        <taxon>Thermococcales</taxon>
        <taxon>Thermococcaceae</taxon>
        <taxon>Pyrococcus</taxon>
    </lineage>
</organism>
<proteinExistence type="inferred from homology"/>
<gene>
    <name type="primary">tmk</name>
    <name type="ordered locus">PYRAB04780</name>
    <name type="ORF">PAB0319</name>
</gene>
<feature type="chain" id="PRO_0000155392" description="Probable thymidylate kinase">
    <location>
        <begin position="1"/>
        <end position="205"/>
    </location>
</feature>
<feature type="binding site" evidence="1">
    <location>
        <begin position="10"/>
        <end position="17"/>
    </location>
    <ligand>
        <name>ATP</name>
        <dbReference type="ChEBI" id="CHEBI:30616"/>
    </ligand>
</feature>